<proteinExistence type="evidence at protein level"/>
<dbReference type="EMBL" id="AF009631">
    <property type="protein sequence ID" value="AAB88283.1"/>
    <property type="molecule type" value="mRNA"/>
</dbReference>
<dbReference type="EMBL" id="AB016882">
    <property type="protein sequence ID" value="BAB08907.1"/>
    <property type="molecule type" value="Genomic_DNA"/>
</dbReference>
<dbReference type="EMBL" id="CP002688">
    <property type="protein sequence ID" value="AED95407.1"/>
    <property type="molecule type" value="Genomic_DNA"/>
</dbReference>
<dbReference type="EMBL" id="AK317765">
    <property type="protein sequence ID" value="BAH20421.1"/>
    <property type="molecule type" value="mRNA"/>
</dbReference>
<dbReference type="RefSeq" id="NP_199475.1">
    <molecule id="O23140-1"/>
    <property type="nucleotide sequence ID" value="NM_124033.4"/>
</dbReference>
<dbReference type="SMR" id="O23140"/>
<dbReference type="BioGRID" id="19954">
    <property type="interactions" value="171"/>
</dbReference>
<dbReference type="FunCoup" id="O23140">
    <property type="interactions" value="4291"/>
</dbReference>
<dbReference type="STRING" id="3702.O23140"/>
<dbReference type="PaxDb" id="3702-AT5G46630.2"/>
<dbReference type="ProteomicsDB" id="246775">
    <molecule id="O23140-1"/>
</dbReference>
<dbReference type="EnsemblPlants" id="AT5G46630.1">
    <molecule id="O23140-1"/>
    <property type="protein sequence ID" value="AT5G46630.1"/>
    <property type="gene ID" value="AT5G46630"/>
</dbReference>
<dbReference type="GeneID" id="834706"/>
<dbReference type="Gramene" id="AT5G46630.1">
    <molecule id="O23140-1"/>
    <property type="protein sequence ID" value="AT5G46630.1"/>
    <property type="gene ID" value="AT5G46630"/>
</dbReference>
<dbReference type="KEGG" id="ath:AT5G46630"/>
<dbReference type="Araport" id="AT5G46630"/>
<dbReference type="TAIR" id="AT5G46630">
    <property type="gene designation" value="AP2M"/>
</dbReference>
<dbReference type="eggNOG" id="KOG0938">
    <property type="taxonomic scope" value="Eukaryota"/>
</dbReference>
<dbReference type="HOGENOM" id="CLU_026996_5_1_1"/>
<dbReference type="InParanoid" id="O23140"/>
<dbReference type="OMA" id="VWKIPRI"/>
<dbReference type="OrthoDB" id="1056058at2759"/>
<dbReference type="PhylomeDB" id="O23140"/>
<dbReference type="PRO" id="PR:O23140"/>
<dbReference type="Proteomes" id="UP000006548">
    <property type="component" value="Chromosome 5"/>
</dbReference>
<dbReference type="ExpressionAtlas" id="O23140">
    <property type="expression patterns" value="baseline and differential"/>
</dbReference>
<dbReference type="GO" id="GO:0030131">
    <property type="term" value="C:clathrin adaptor complex"/>
    <property type="evidence" value="ECO:0007669"/>
    <property type="project" value="InterPro"/>
</dbReference>
<dbReference type="GO" id="GO:0005905">
    <property type="term" value="C:clathrin-coated pit"/>
    <property type="evidence" value="ECO:0007669"/>
    <property type="project" value="UniProtKB-KW"/>
</dbReference>
<dbReference type="GO" id="GO:0005794">
    <property type="term" value="C:Golgi apparatus"/>
    <property type="evidence" value="ECO:0007669"/>
    <property type="project" value="UniProtKB-SubCell"/>
</dbReference>
<dbReference type="GO" id="GO:0005886">
    <property type="term" value="C:plasma membrane"/>
    <property type="evidence" value="ECO:0007669"/>
    <property type="project" value="UniProtKB-SubCell"/>
</dbReference>
<dbReference type="GO" id="GO:0008289">
    <property type="term" value="F:lipid binding"/>
    <property type="evidence" value="ECO:0007669"/>
    <property type="project" value="UniProtKB-KW"/>
</dbReference>
<dbReference type="GO" id="GO:0006897">
    <property type="term" value="P:endocytosis"/>
    <property type="evidence" value="ECO:0007669"/>
    <property type="project" value="UniProtKB-KW"/>
</dbReference>
<dbReference type="GO" id="GO:0006886">
    <property type="term" value="P:intracellular protein transport"/>
    <property type="evidence" value="ECO:0007669"/>
    <property type="project" value="InterPro"/>
</dbReference>
<dbReference type="CDD" id="cd09251">
    <property type="entry name" value="AP-2_Mu2_Cterm"/>
    <property type="match status" value="1"/>
</dbReference>
<dbReference type="CDD" id="cd14836">
    <property type="entry name" value="AP2_Mu_N"/>
    <property type="match status" value="1"/>
</dbReference>
<dbReference type="FunFam" id="2.60.40.1170:FF:000023">
    <property type="entry name" value="AP-2 complex subunit mu"/>
    <property type="match status" value="1"/>
</dbReference>
<dbReference type="FunFam" id="3.30.450.60:FF:000002">
    <property type="entry name" value="AP-2 complex subunit mu, putative"/>
    <property type="match status" value="1"/>
</dbReference>
<dbReference type="Gene3D" id="3.30.450.60">
    <property type="match status" value="1"/>
</dbReference>
<dbReference type="Gene3D" id="2.60.40.1170">
    <property type="entry name" value="Mu homology domain, subdomain B"/>
    <property type="match status" value="2"/>
</dbReference>
<dbReference type="InterPro" id="IPR050431">
    <property type="entry name" value="Adaptor_comp_med_subunit"/>
</dbReference>
<dbReference type="InterPro" id="IPR036168">
    <property type="entry name" value="AP2_Mu_C_sf"/>
</dbReference>
<dbReference type="InterPro" id="IPR043532">
    <property type="entry name" value="AP2_Mu_N"/>
</dbReference>
<dbReference type="InterPro" id="IPR001392">
    <property type="entry name" value="Clathrin_mu"/>
</dbReference>
<dbReference type="InterPro" id="IPR018240">
    <property type="entry name" value="Clathrin_mu_CS"/>
</dbReference>
<dbReference type="InterPro" id="IPR011012">
    <property type="entry name" value="Longin-like_dom_sf"/>
</dbReference>
<dbReference type="InterPro" id="IPR028565">
    <property type="entry name" value="MHD"/>
</dbReference>
<dbReference type="InterPro" id="IPR043512">
    <property type="entry name" value="Mu2_C"/>
</dbReference>
<dbReference type="PANTHER" id="PTHR10529">
    <property type="entry name" value="AP COMPLEX SUBUNIT MU"/>
    <property type="match status" value="1"/>
</dbReference>
<dbReference type="Pfam" id="PF00928">
    <property type="entry name" value="Adap_comp_sub"/>
    <property type="match status" value="1"/>
</dbReference>
<dbReference type="PIRSF" id="PIRSF005992">
    <property type="entry name" value="Clathrin_mu"/>
    <property type="match status" value="1"/>
</dbReference>
<dbReference type="PRINTS" id="PR00314">
    <property type="entry name" value="CLATHRINADPT"/>
</dbReference>
<dbReference type="SUPFAM" id="SSF49447">
    <property type="entry name" value="Second domain of Mu2 adaptin subunit (ap50) of ap2 adaptor"/>
    <property type="match status" value="1"/>
</dbReference>
<dbReference type="SUPFAM" id="SSF64356">
    <property type="entry name" value="SNARE-like"/>
    <property type="match status" value="1"/>
</dbReference>
<dbReference type="PROSITE" id="PS00990">
    <property type="entry name" value="CLAT_ADAPTOR_M_1"/>
    <property type="match status" value="1"/>
</dbReference>
<dbReference type="PROSITE" id="PS51072">
    <property type="entry name" value="MHD"/>
    <property type="match status" value="1"/>
</dbReference>
<feature type="chain" id="PRO_0000424262" description="AP-2 complex subunit mu">
    <location>
        <begin position="1"/>
        <end position="438"/>
    </location>
</feature>
<feature type="domain" description="MHD" evidence="2">
    <location>
        <begin position="177"/>
        <end position="437"/>
    </location>
</feature>
<keyword id="KW-0025">Alternative splicing</keyword>
<keyword id="KW-1003">Cell membrane</keyword>
<keyword id="KW-0168">Coated pit</keyword>
<keyword id="KW-0254">Endocytosis</keyword>
<keyword id="KW-0333">Golgi apparatus</keyword>
<keyword id="KW-0446">Lipid-binding</keyword>
<keyword id="KW-0472">Membrane</keyword>
<keyword id="KW-0653">Protein transport</keyword>
<keyword id="KW-1185">Reference proteome</keyword>
<keyword id="KW-0813">Transport</keyword>
<sequence>MPVAASAIYFLNLRGDVLINRTYRDDVGGNMVDAFRTHIMQTKELGNCPVRQIGGCSFVYMRISNVYIVIVVSSNANVACGFKFVVEAVALFKSYFGGAFDEDAIRNNFVLIYELLDEIMDFGYPQNLSPEILKLYITQEGVRSPFSSKPKDKPVPNATLQVTGAVGWRREGLAYKKNEVFLDIVESVNLLMSSKGNVLRCDVTGKVLMKCFLSGMPDLKLGLNDKIGLEKESEMKSRPAKSGKTIELDDVTFHQCVNLTRFNSEKTVSFVPPDGEFELMKYRITEGVNLPFRVLPTIKELGRTRMEVNVKVKSVFGAKMFALGVVVKIPVPKQTAKTNFQVTTGRAKYNPSIDCLVWKIRKFPGQTESTLSAEIELISTMGEKKSWTRPPIQMEFQVPMFTASGLRVRFLKVWEKSGYNTVEWVRYITKAGSYEIRC</sequence>
<accession>O23140</accession>
<accession>B9DI54</accession>
<gene>
    <name type="primary">AP2M</name>
    <name type="synonym">AP47/50</name>
    <name type="ordered locus">At5g46630</name>
    <name type="ORF">MZA15.2</name>
</gene>
<comment type="function">
    <text evidence="3">Subunit of the adaptor protein complex 2 (AP-2). Adaptor protein complexes function in protein transport via transport vesicles in different membrane traffic pathways. Adaptor protein complexes are vesicle coat components and appear to be involved in cargo selection and vesicle formation. AP-2 is involved in clathrin-dependent endocytosis in which cargo proteins are incorporated into vesicles surrounded by clathrin (clathrin-coated vesicles, CCVs) which are destined for fusion with the early endosome. AP-2 recognizes Y-X-X-Phi endocytosis signal motif within the cytosolic tails of transmembrane cargo molecules. The complex binds polyphosphoinositides.</text>
</comment>
<comment type="subunit">
    <text evidence="1">Adaptor protein complex 2 (AP-2) is a heterotetramer composed of two large adaptins (alpha-type and beta-type subunits), a medium adaptin (mu-type subunit) and a small adaptin (sigma-type subunit).</text>
</comment>
<comment type="subcellular location">
    <subcellularLocation>
        <location evidence="3">Cell membrane</location>
    </subcellularLocation>
    <subcellularLocation>
        <location evidence="1">Membrane</location>
        <location evidence="1">Coated pit</location>
        <topology evidence="1">Peripheral membrane protein</topology>
        <orientation evidence="1">Cytoplasmic side</orientation>
    </subcellularLocation>
    <subcellularLocation>
        <location evidence="3">Golgi apparatus</location>
        <location evidence="3">trans-Golgi network membrane</location>
        <topology evidence="3">Peripheral membrane protein</topology>
        <orientation evidence="3">Cytoplasmic side</orientation>
    </subcellularLocation>
    <text evidence="1 3">Component of the coat surrounding the cytoplasmic face of coated vesicles in the plasma membrane (By similarity). Detected in the trans-Golgi membrane but not in the plasmamembrane (PubMed:14871308).</text>
</comment>
<comment type="alternative products">
    <event type="alternative splicing"/>
    <isoform>
        <id>O23140-1</id>
        <name>1</name>
        <sequence type="displayed"/>
    </isoform>
    <text>A number of isoforms are produced. According to EST sequences.</text>
</comment>
<comment type="similarity">
    <text evidence="4">Belongs to the adaptor complexes medium subunit family.</text>
</comment>
<protein>
    <recommendedName>
        <fullName>AP-2 complex subunit mu</fullName>
    </recommendedName>
    <alternativeName>
        <fullName>Adaptor protein complex AP-2 subunit mu</fullName>
    </alternativeName>
    <alternativeName>
        <fullName>Adaptor protein-2 mu-adaptin</fullName>
    </alternativeName>
    <alternativeName>
        <fullName>Adaptor-related protein complex 2 subunit mu</fullName>
    </alternativeName>
    <alternativeName>
        <fullName>At-muA-Ad</fullName>
    </alternativeName>
    <alternativeName>
        <fullName>Clathrin assembly protein complex 2 mu medium chain</fullName>
    </alternativeName>
    <alternativeName>
        <fullName>Mu2-adaptin</fullName>
    </alternativeName>
    <alternativeName>
        <fullName>Protein AP47/50</fullName>
        <shortName>AtAP47/50</shortName>
    </alternativeName>
</protein>
<reference key="1">
    <citation type="online journal article" date="1997" name="Plant Gene Register">
        <title>An Arabidopsis thaliana cDNA clone is homologous to the micro-adaptins of clathrin-coated vesicle adaptor complexes.</title>
        <authorList>
            <person name="Happel N."/>
            <person name="Robinson D.G."/>
            <person name="Holstein S.H."/>
        </authorList>
        <locator>PGR97-168</locator>
    </citation>
    <scope>NUCLEOTIDE SEQUENCE [MRNA]</scope>
    <source>
        <strain>cv. Columbia</strain>
    </source>
</reference>
<reference key="2">
    <citation type="journal article" date="1998" name="DNA Res.">
        <title>Structural analysis of Arabidopsis thaliana chromosome 5. VIII. Sequence features of the regions of 1,081,958 bp covered by seventeen physically assigned P1 and TAC clones.</title>
        <authorList>
            <person name="Asamizu E."/>
            <person name="Sato S."/>
            <person name="Kaneko T."/>
            <person name="Nakamura Y."/>
            <person name="Kotani H."/>
            <person name="Miyajima N."/>
            <person name="Tabata S."/>
        </authorList>
    </citation>
    <scope>NUCLEOTIDE SEQUENCE [LARGE SCALE GENOMIC DNA]</scope>
    <source>
        <strain>cv. Columbia</strain>
    </source>
</reference>
<reference key="3">
    <citation type="journal article" date="2017" name="Plant J.">
        <title>Araport11: a complete reannotation of the Arabidopsis thaliana reference genome.</title>
        <authorList>
            <person name="Cheng C.Y."/>
            <person name="Krishnakumar V."/>
            <person name="Chan A.P."/>
            <person name="Thibaud-Nissen F."/>
            <person name="Schobel S."/>
            <person name="Town C.D."/>
        </authorList>
    </citation>
    <scope>GENOME REANNOTATION</scope>
    <source>
        <strain>cv. Columbia</strain>
    </source>
</reference>
<reference key="4">
    <citation type="journal article" date="2009" name="DNA Res.">
        <title>Analysis of multiple occurrences of alternative splicing events in Arabidopsis thaliana using novel sequenced full-length cDNAs.</title>
        <authorList>
            <person name="Iida K."/>
            <person name="Fukami-Kobayashi K."/>
            <person name="Toyoda A."/>
            <person name="Sakaki Y."/>
            <person name="Kobayashi M."/>
            <person name="Seki M."/>
            <person name="Shinozaki K."/>
        </authorList>
    </citation>
    <scope>NUCLEOTIDE SEQUENCE [LARGE SCALE MRNA] OF 306-438</scope>
    <source>
        <strain>cv. Columbia</strain>
        <tissue>Flower</tissue>
        <tissue>Silique</tissue>
    </source>
</reference>
<reference key="5">
    <citation type="journal article" date="2001" name="Mol. Biol. Cell">
        <title>Adaptins: the final recount.</title>
        <authorList>
            <person name="Boehm M."/>
            <person name="Bonifacino J.S."/>
        </authorList>
    </citation>
    <scope>GENE FAMILY</scope>
    <scope>REVIEW</scope>
</reference>
<reference key="6">
    <citation type="journal article" date="2004" name="Plant J.">
        <title>Arabidopsis muA-adaptin interacts with the tyrosine motif of the vacuolar sorting receptor VSR-PS1.</title>
        <authorList>
            <person name="Happel N."/>
            <person name="Hoening S."/>
            <person name="Neuhaus J.M."/>
            <person name="Paris N."/>
            <person name="Robinson D.G."/>
            <person name="Holstein S.E."/>
        </authorList>
    </citation>
    <scope>GENE FAMILY</scope>
    <scope>FUNCTION</scope>
    <scope>SUBUNIT</scope>
    <scope>SUBCELLULAR LOCATION</scope>
</reference>
<name>AP2M_ARATH</name>
<evidence type="ECO:0000250" key="1"/>
<evidence type="ECO:0000255" key="2">
    <source>
        <dbReference type="PROSITE-ProRule" id="PRU00404"/>
    </source>
</evidence>
<evidence type="ECO:0000269" key="3">
    <source>
    </source>
</evidence>
<evidence type="ECO:0000305" key="4"/>
<organism>
    <name type="scientific">Arabidopsis thaliana</name>
    <name type="common">Mouse-ear cress</name>
    <dbReference type="NCBI Taxonomy" id="3702"/>
    <lineage>
        <taxon>Eukaryota</taxon>
        <taxon>Viridiplantae</taxon>
        <taxon>Streptophyta</taxon>
        <taxon>Embryophyta</taxon>
        <taxon>Tracheophyta</taxon>
        <taxon>Spermatophyta</taxon>
        <taxon>Magnoliopsida</taxon>
        <taxon>eudicotyledons</taxon>
        <taxon>Gunneridae</taxon>
        <taxon>Pentapetalae</taxon>
        <taxon>rosids</taxon>
        <taxon>malvids</taxon>
        <taxon>Brassicales</taxon>
        <taxon>Brassicaceae</taxon>
        <taxon>Camelineae</taxon>
        <taxon>Arabidopsis</taxon>
    </lineage>
</organism>